<proteinExistence type="predicted"/>
<feature type="chain" id="PRO_0000330734" description="Uncharacterized transmembrane protein DDB_G0276999">
    <location>
        <begin position="1"/>
        <end position="258"/>
    </location>
</feature>
<feature type="transmembrane region" description="Helical" evidence="1">
    <location>
        <begin position="33"/>
        <end position="53"/>
    </location>
</feature>
<feature type="transmembrane region" description="Helical" evidence="1">
    <location>
        <begin position="59"/>
        <end position="79"/>
    </location>
</feature>
<feature type="transmembrane region" description="Helical" evidence="1">
    <location>
        <begin position="88"/>
        <end position="108"/>
    </location>
</feature>
<feature type="transmembrane region" description="Helical" evidence="1">
    <location>
        <begin position="140"/>
        <end position="160"/>
    </location>
</feature>
<feature type="region of interest" description="Disordered" evidence="2">
    <location>
        <begin position="237"/>
        <end position="258"/>
    </location>
</feature>
<feature type="compositionally biased region" description="Polar residues" evidence="2">
    <location>
        <begin position="242"/>
        <end position="258"/>
    </location>
</feature>
<evidence type="ECO:0000255" key="1"/>
<evidence type="ECO:0000256" key="2">
    <source>
        <dbReference type="SAM" id="MobiDB-lite"/>
    </source>
</evidence>
<evidence type="ECO:0000305" key="3"/>
<sequence>MYRNILRKLKRQINTILKIYIFIKKHEHHLRKLFVIFQVIISIVLLSLSVTTNDHDHLFDSWYYFASHLILSLFGIFVFFKKSTNSKLLYLYVILLSGLLITASFSFFWYSGELNIIENTCISDQCNHDRAYYRKKTYKIIALIVVEGVALHPNLSWLIQVLKKERKLKQLNTINNTNDTAIRSPSLNNISGNNNNNINNNNINNSNNNINNTSYNNDYFNNHNIINNNKNNIYNNNNKINSELQPPSILNKNSKPIE</sequence>
<dbReference type="EMBL" id="AAFI02000019">
    <property type="protein sequence ID" value="EAL69001.1"/>
    <property type="molecule type" value="Genomic_DNA"/>
</dbReference>
<dbReference type="RefSeq" id="XP_642851.1">
    <property type="nucleotide sequence ID" value="XM_637759.1"/>
</dbReference>
<dbReference type="FunCoup" id="Q550T1">
    <property type="interactions" value="18"/>
</dbReference>
<dbReference type="PaxDb" id="44689-DDB0266476"/>
<dbReference type="EnsemblProtists" id="EAL69001">
    <property type="protein sequence ID" value="EAL69001"/>
    <property type="gene ID" value="DDB_G0276999"/>
</dbReference>
<dbReference type="GeneID" id="8620715"/>
<dbReference type="KEGG" id="ddi:DDB_G0276999"/>
<dbReference type="dictyBase" id="DDB_G0276999"/>
<dbReference type="VEuPathDB" id="AmoebaDB:DDB_G0276999"/>
<dbReference type="eggNOG" id="ENOG502RHYH">
    <property type="taxonomic scope" value="Eukaryota"/>
</dbReference>
<dbReference type="HOGENOM" id="CLU_1079368_0_0_1"/>
<dbReference type="InParanoid" id="Q550T1"/>
<dbReference type="OMA" id="DSNTNCE"/>
<dbReference type="PRO" id="PR:Q550T1"/>
<dbReference type="Proteomes" id="UP000002195">
    <property type="component" value="Chromosome 2"/>
</dbReference>
<dbReference type="GO" id="GO:0016020">
    <property type="term" value="C:membrane"/>
    <property type="evidence" value="ECO:0007669"/>
    <property type="project" value="UniProtKB-SubCell"/>
</dbReference>
<reference key="1">
    <citation type="journal article" date="2002" name="Nature">
        <title>Sequence and analysis of chromosome 2 of Dictyostelium discoideum.</title>
        <authorList>
            <person name="Gloeckner G."/>
            <person name="Eichinger L."/>
            <person name="Szafranski K."/>
            <person name="Pachebat J.A."/>
            <person name="Bankier A.T."/>
            <person name="Dear P.H."/>
            <person name="Lehmann R."/>
            <person name="Baumgart C."/>
            <person name="Parra G."/>
            <person name="Abril J.F."/>
            <person name="Guigo R."/>
            <person name="Kumpf K."/>
            <person name="Tunggal B."/>
            <person name="Cox E.C."/>
            <person name="Quail M.A."/>
            <person name="Platzer M."/>
            <person name="Rosenthal A."/>
            <person name="Noegel A.A."/>
        </authorList>
    </citation>
    <scope>NUCLEOTIDE SEQUENCE [LARGE SCALE GENOMIC DNA]</scope>
    <source>
        <strain>AX4</strain>
    </source>
</reference>
<reference key="2">
    <citation type="journal article" date="2005" name="Nature">
        <title>The genome of the social amoeba Dictyostelium discoideum.</title>
        <authorList>
            <person name="Eichinger L."/>
            <person name="Pachebat J.A."/>
            <person name="Gloeckner G."/>
            <person name="Rajandream M.A."/>
            <person name="Sucgang R."/>
            <person name="Berriman M."/>
            <person name="Song J."/>
            <person name="Olsen R."/>
            <person name="Szafranski K."/>
            <person name="Xu Q."/>
            <person name="Tunggal B."/>
            <person name="Kummerfeld S."/>
            <person name="Madera M."/>
            <person name="Konfortov B.A."/>
            <person name="Rivero F."/>
            <person name="Bankier A.T."/>
            <person name="Lehmann R."/>
            <person name="Hamlin N."/>
            <person name="Davies R."/>
            <person name="Gaudet P."/>
            <person name="Fey P."/>
            <person name="Pilcher K."/>
            <person name="Chen G."/>
            <person name="Saunders D."/>
            <person name="Sodergren E.J."/>
            <person name="Davis P."/>
            <person name="Kerhornou A."/>
            <person name="Nie X."/>
            <person name="Hall N."/>
            <person name="Anjard C."/>
            <person name="Hemphill L."/>
            <person name="Bason N."/>
            <person name="Farbrother P."/>
            <person name="Desany B."/>
            <person name="Just E."/>
            <person name="Morio T."/>
            <person name="Rost R."/>
            <person name="Churcher C.M."/>
            <person name="Cooper J."/>
            <person name="Haydock S."/>
            <person name="van Driessche N."/>
            <person name="Cronin A."/>
            <person name="Goodhead I."/>
            <person name="Muzny D.M."/>
            <person name="Mourier T."/>
            <person name="Pain A."/>
            <person name="Lu M."/>
            <person name="Harper D."/>
            <person name="Lindsay R."/>
            <person name="Hauser H."/>
            <person name="James K.D."/>
            <person name="Quiles M."/>
            <person name="Madan Babu M."/>
            <person name="Saito T."/>
            <person name="Buchrieser C."/>
            <person name="Wardroper A."/>
            <person name="Felder M."/>
            <person name="Thangavelu M."/>
            <person name="Johnson D."/>
            <person name="Knights A."/>
            <person name="Loulseged H."/>
            <person name="Mungall K.L."/>
            <person name="Oliver K."/>
            <person name="Price C."/>
            <person name="Quail M.A."/>
            <person name="Urushihara H."/>
            <person name="Hernandez J."/>
            <person name="Rabbinowitsch E."/>
            <person name="Steffen D."/>
            <person name="Sanders M."/>
            <person name="Ma J."/>
            <person name="Kohara Y."/>
            <person name="Sharp S."/>
            <person name="Simmonds M.N."/>
            <person name="Spiegler S."/>
            <person name="Tivey A."/>
            <person name="Sugano S."/>
            <person name="White B."/>
            <person name="Walker D."/>
            <person name="Woodward J.R."/>
            <person name="Winckler T."/>
            <person name="Tanaka Y."/>
            <person name="Shaulsky G."/>
            <person name="Schleicher M."/>
            <person name="Weinstock G.M."/>
            <person name="Rosenthal A."/>
            <person name="Cox E.C."/>
            <person name="Chisholm R.L."/>
            <person name="Gibbs R.A."/>
            <person name="Loomis W.F."/>
            <person name="Platzer M."/>
            <person name="Kay R.R."/>
            <person name="Williams J.G."/>
            <person name="Dear P.H."/>
            <person name="Noegel A.A."/>
            <person name="Barrell B.G."/>
            <person name="Kuspa A."/>
        </authorList>
    </citation>
    <scope>NUCLEOTIDE SEQUENCE [LARGE SCALE GENOMIC DNA]</scope>
    <source>
        <strain>AX4</strain>
    </source>
</reference>
<comment type="subcellular location">
    <subcellularLocation>
        <location evidence="3">Membrane</location>
        <topology evidence="3">Multi-pass membrane protein</topology>
    </subcellularLocation>
</comment>
<name>Y6476_DICDI</name>
<keyword id="KW-0472">Membrane</keyword>
<keyword id="KW-1185">Reference proteome</keyword>
<keyword id="KW-0812">Transmembrane</keyword>
<keyword id="KW-1133">Transmembrane helix</keyword>
<organism>
    <name type="scientific">Dictyostelium discoideum</name>
    <name type="common">Social amoeba</name>
    <dbReference type="NCBI Taxonomy" id="44689"/>
    <lineage>
        <taxon>Eukaryota</taxon>
        <taxon>Amoebozoa</taxon>
        <taxon>Evosea</taxon>
        <taxon>Eumycetozoa</taxon>
        <taxon>Dictyostelia</taxon>
        <taxon>Dictyosteliales</taxon>
        <taxon>Dictyosteliaceae</taxon>
        <taxon>Dictyostelium</taxon>
    </lineage>
</organism>
<accession>Q550T1</accession>
<accession>Q86JB7</accession>
<protein>
    <recommendedName>
        <fullName>Uncharacterized transmembrane protein DDB_G0276999</fullName>
    </recommendedName>
</protein>
<gene>
    <name type="ORF">DDB_G0276999</name>
</gene>